<keyword id="KW-0106">Calcium</keyword>
<keyword id="KW-0131">Cell cycle</keyword>
<keyword id="KW-0132">Cell division</keyword>
<keyword id="KW-0159">Chromosome partition</keyword>
<keyword id="KW-0963">Cytoplasm</keyword>
<keyword id="KW-0226">DNA condensation</keyword>
<protein>
    <recommendedName>
        <fullName>Chromosome partition protein MukF</fullName>
    </recommendedName>
</protein>
<reference key="1">
    <citation type="submission" date="2002-02" db="EMBL/GenBank/DDBJ databases">
        <title>Functional genomic approach to identify virulence genes involved in Edwardsiella tarda pathogenesis.</title>
        <authorList>
            <person name="Srinivasa Rao P.S."/>
            <person name="Lim T.M."/>
            <person name="Leung K.Y."/>
        </authorList>
    </citation>
    <scope>NUCLEOTIDE SEQUENCE [GENOMIC DNA]</scope>
    <source>
        <strain>PPD130/91</strain>
    </source>
</reference>
<dbReference type="EMBL" id="AY078510">
    <property type="protein sequence ID" value="AAL82725.1"/>
    <property type="molecule type" value="Genomic_DNA"/>
</dbReference>
<dbReference type="SMR" id="Q8GF09"/>
<dbReference type="STRING" id="636.AAW15_06160"/>
<dbReference type="GO" id="GO:0005737">
    <property type="term" value="C:cytoplasm"/>
    <property type="evidence" value="ECO:0007669"/>
    <property type="project" value="UniProtKB-KW"/>
</dbReference>
<dbReference type="GO" id="GO:0009295">
    <property type="term" value="C:nucleoid"/>
    <property type="evidence" value="ECO:0007669"/>
    <property type="project" value="UniProtKB-SubCell"/>
</dbReference>
<dbReference type="GO" id="GO:0051301">
    <property type="term" value="P:cell division"/>
    <property type="evidence" value="ECO:0007669"/>
    <property type="project" value="UniProtKB-KW"/>
</dbReference>
<dbReference type="GO" id="GO:0030261">
    <property type="term" value="P:chromosome condensation"/>
    <property type="evidence" value="ECO:0007669"/>
    <property type="project" value="UniProtKB-KW"/>
</dbReference>
<dbReference type="GO" id="GO:0007059">
    <property type="term" value="P:chromosome segregation"/>
    <property type="evidence" value="ECO:0007669"/>
    <property type="project" value="UniProtKB-KW"/>
</dbReference>
<dbReference type="Gene3D" id="1.20.58.590">
    <property type="entry name" value="Chromosome partition protein MukF, middle domain"/>
    <property type="match status" value="1"/>
</dbReference>
<dbReference type="Gene3D" id="1.10.10.10">
    <property type="entry name" value="Winged helix-like DNA-binding domain superfamily/Winged helix DNA-binding domain"/>
    <property type="match status" value="1"/>
</dbReference>
<dbReference type="InterPro" id="IPR033440">
    <property type="entry name" value="MukF_M"/>
</dbReference>
<dbReference type="InterPro" id="IPR036141">
    <property type="entry name" value="MukF_M_sp"/>
</dbReference>
<dbReference type="InterPro" id="IPR033439">
    <property type="entry name" value="MukF_WHTH"/>
</dbReference>
<dbReference type="InterPro" id="IPR036388">
    <property type="entry name" value="WH-like_DNA-bd_sf"/>
</dbReference>
<dbReference type="InterPro" id="IPR036390">
    <property type="entry name" value="WH_DNA-bd_sf"/>
</dbReference>
<dbReference type="Pfam" id="PF03882">
    <property type="entry name" value="KicB"/>
    <property type="match status" value="1"/>
</dbReference>
<dbReference type="Pfam" id="PF17192">
    <property type="entry name" value="MukF_M"/>
    <property type="match status" value="1"/>
</dbReference>
<dbReference type="SUPFAM" id="SSF140570">
    <property type="entry name" value="MukF C-terminal domain-like"/>
    <property type="match status" value="1"/>
</dbReference>
<dbReference type="SUPFAM" id="SSF46785">
    <property type="entry name" value="Winged helix' DNA-binding domain"/>
    <property type="match status" value="1"/>
</dbReference>
<feature type="chain" id="PRO_0000211599" description="Chromosome partition protein MukF">
    <location>
        <begin position="1"/>
        <end position="182" status="greater than"/>
    </location>
</feature>
<feature type="non-terminal residue">
    <location>
        <position position="182"/>
    </location>
</feature>
<sequence length="182" mass="20595">MSDFSQTVPELVAWARKNDFALTLPTERLAFLLAIATLNGERLDGEMSEGDLVDVFRHVSKTFEQTHETVAQRANNAINDLVKQRLLNRFTSELAEGNAIYRLTPLGISISDYYIRQREFSTLRLSMQLSIVAQELRAAGDAAEEGGDEFHWHRNVFAPLKYSVAEIFDSIDLTQRLMDEAA</sequence>
<organism>
    <name type="scientific">Edwardsiella tarda</name>
    <dbReference type="NCBI Taxonomy" id="636"/>
    <lineage>
        <taxon>Bacteria</taxon>
        <taxon>Pseudomonadati</taxon>
        <taxon>Pseudomonadota</taxon>
        <taxon>Gammaproteobacteria</taxon>
        <taxon>Enterobacterales</taxon>
        <taxon>Hafniaceae</taxon>
        <taxon>Edwardsiella</taxon>
    </lineage>
</organism>
<comment type="function">
    <text evidence="1">Involved in chromosome condensation, segregation and cell cycle progression. May participate in facilitating chromosome segregation by condensation DNA from both sides of a centrally located replisome during cell division. Not required for mini-F plasmid partitioning. Probably acts via its interaction with MukB and MukE. Overexpression results in anucleate cells. It has a calcium binding activity (By similarity).</text>
</comment>
<comment type="subunit">
    <text evidence="1">Interacts, and probably forms a ternary complex, with MukE and MukB via its C-terminal region. The complex formation is stimulated by calcium or magnesium. It is required for an interaction between MukE and MukB (By similarity).</text>
</comment>
<comment type="subcellular location">
    <subcellularLocation>
        <location evidence="1">Cytoplasm</location>
        <location evidence="1">Nucleoid</location>
    </subcellularLocation>
    <text evidence="1">Restricted to the nucleoid region.</text>
</comment>
<comment type="similarity">
    <text evidence="2">Belongs to the MukF family.</text>
</comment>
<accession>Q8GF09</accession>
<proteinExistence type="inferred from homology"/>
<name>MUKF_EDWTA</name>
<gene>
    <name type="primary">mukF</name>
</gene>
<evidence type="ECO:0000250" key="1"/>
<evidence type="ECO:0000305" key="2"/>